<gene>
    <name type="primary">LCP3</name>
</gene>
<proteinExistence type="evidence at transcript level"/>
<comment type="activity regulation">
    <text>Inhibited by E-64, antipain, leupeptin, heavy metal ions, iodoacetic acid, dithionitrobenzene, p-hydroxymercuri-benzoate; activated by mercaptoethanol and dithiothreitol.</text>
</comment>
<comment type="similarity">
    <text evidence="3 4 5">Belongs to the peptidase C1 family.</text>
</comment>
<comment type="sequence caution" evidence="6">
    <conflict type="erroneous initiation">
        <sequence resource="EMBL-CDS" id="CAA45129"/>
    </conflict>
</comment>
<name>CYSP3_HOMAM</name>
<reference key="1">
    <citation type="journal article" date="1991" name="FEBS Lett.">
        <title>Molecular cloning of three cDNAs that encode cysteine proteinases in the digestive gland of the American lobster (Homarus americanus).</title>
        <authorList>
            <person name="Laycock M.V."/>
            <person name="MacKay R.M."/>
            <person name="Di Fruscio M."/>
            <person name="Gallant J.W."/>
        </authorList>
    </citation>
    <scope>NUCLEOTIDE SEQUENCE [MRNA]</scope>
    <source>
        <tissue>Digestive gland</tissue>
    </source>
</reference>
<reference key="2">
    <citation type="journal article" date="1992" name="FEBS Lett.">
        <authorList>
            <person name="Laycock M.V."/>
            <person name="MacKay R.M."/>
            <person name="Di Fruscio M."/>
            <person name="Gallant J.W."/>
        </authorList>
    </citation>
    <scope>ERRATUM OF PUBMED:1959590</scope>
</reference>
<organism>
    <name type="scientific">Homarus americanus</name>
    <name type="common">American lobster</name>
    <dbReference type="NCBI Taxonomy" id="6706"/>
    <lineage>
        <taxon>Eukaryota</taxon>
        <taxon>Metazoa</taxon>
        <taxon>Ecdysozoa</taxon>
        <taxon>Arthropoda</taxon>
        <taxon>Crustacea</taxon>
        <taxon>Multicrustacea</taxon>
        <taxon>Malacostraca</taxon>
        <taxon>Eumalacostraca</taxon>
        <taxon>Eucarida</taxon>
        <taxon>Decapoda</taxon>
        <taxon>Pleocyemata</taxon>
        <taxon>Astacidea</taxon>
        <taxon>Nephropoidea</taxon>
        <taxon>Nephropidae</taxon>
        <taxon>Homarus</taxon>
    </lineage>
</organism>
<evidence type="ECO:0000250" key="1"/>
<evidence type="ECO:0000255" key="2"/>
<evidence type="ECO:0000255" key="3">
    <source>
        <dbReference type="PROSITE-ProRule" id="PRU10088"/>
    </source>
</evidence>
<evidence type="ECO:0000255" key="4">
    <source>
        <dbReference type="PROSITE-ProRule" id="PRU10089"/>
    </source>
</evidence>
<evidence type="ECO:0000255" key="5">
    <source>
        <dbReference type="PROSITE-ProRule" id="PRU10090"/>
    </source>
</evidence>
<evidence type="ECO:0000305" key="6"/>
<accession>P25784</accession>
<sequence>MKVAALFLCGLALATASPSWDHFKTQYGRKYGDAKEELYRQRVFQQNEQLIEDFNKKFENGEVTFKVAMNQFGDMTNEEFNAVMKGYKKGSRGEPKAVFTAEAGPMAADVDWRTKALVTPVKDQEQCGSCWAFSATGALEGQHFLKNDELVSLSEQQLVDCSTDYGNDGCGGGWMTSAFDYIKDNGGIDTESSYPYEAEDRSCRFDANSIGAICTGSVEVQHTEEALQEAVSGVGPISVAIDASHFSFQFYSSGVYYEQNCSPTFLDHGVLAVGYGTESTKDYWLVKNSWGSSWGDAGYIKMSRNRDNNCGIASEPSYPTV</sequence>
<protein>
    <recommendedName>
        <fullName>Digestive cysteine proteinase 3</fullName>
        <ecNumber>3.4.22.-</ecNumber>
    </recommendedName>
</protein>
<dbReference type="EC" id="3.4.22.-"/>
<dbReference type="EMBL" id="X63569">
    <property type="protein sequence ID" value="CAA45129.1"/>
    <property type="status" value="ALT_INIT"/>
    <property type="molecule type" value="mRNA"/>
</dbReference>
<dbReference type="PIR" id="S19651">
    <property type="entry name" value="S19651"/>
</dbReference>
<dbReference type="SMR" id="P25784"/>
<dbReference type="MEROPS" id="I29.003"/>
<dbReference type="OrthoDB" id="6479863at2759"/>
<dbReference type="GO" id="GO:0008234">
    <property type="term" value="F:cysteine-type peptidase activity"/>
    <property type="evidence" value="ECO:0007669"/>
    <property type="project" value="UniProtKB-KW"/>
</dbReference>
<dbReference type="GO" id="GO:0006508">
    <property type="term" value="P:proteolysis"/>
    <property type="evidence" value="ECO:0007669"/>
    <property type="project" value="UniProtKB-KW"/>
</dbReference>
<dbReference type="CDD" id="cd02248">
    <property type="entry name" value="Peptidase_C1A"/>
    <property type="match status" value="1"/>
</dbReference>
<dbReference type="FunFam" id="2.40.50.170:FF:000001">
    <property type="entry name" value="Cathepsin L1"/>
    <property type="match status" value="1"/>
</dbReference>
<dbReference type="FunFam" id="3.90.70.10:FF:000006">
    <property type="entry name" value="Cathepsin S"/>
    <property type="match status" value="1"/>
</dbReference>
<dbReference type="Gene3D" id="3.90.70.10">
    <property type="entry name" value="Cysteine proteinases"/>
    <property type="match status" value="1"/>
</dbReference>
<dbReference type="InterPro" id="IPR038765">
    <property type="entry name" value="Papain-like_cys_pep_sf"/>
</dbReference>
<dbReference type="InterPro" id="IPR025661">
    <property type="entry name" value="Pept_asp_AS"/>
</dbReference>
<dbReference type="InterPro" id="IPR000169">
    <property type="entry name" value="Pept_cys_AS"/>
</dbReference>
<dbReference type="InterPro" id="IPR025660">
    <property type="entry name" value="Pept_his_AS"/>
</dbReference>
<dbReference type="InterPro" id="IPR013128">
    <property type="entry name" value="Peptidase_C1A"/>
</dbReference>
<dbReference type="InterPro" id="IPR000668">
    <property type="entry name" value="Peptidase_C1A_C"/>
</dbReference>
<dbReference type="InterPro" id="IPR039417">
    <property type="entry name" value="Peptidase_C1A_papain-like"/>
</dbReference>
<dbReference type="InterPro" id="IPR013201">
    <property type="entry name" value="Prot_inhib_I29"/>
</dbReference>
<dbReference type="PANTHER" id="PTHR12411">
    <property type="entry name" value="CYSTEINE PROTEASE FAMILY C1-RELATED"/>
    <property type="match status" value="1"/>
</dbReference>
<dbReference type="Pfam" id="PF08246">
    <property type="entry name" value="Inhibitor_I29"/>
    <property type="match status" value="1"/>
</dbReference>
<dbReference type="Pfam" id="PF00112">
    <property type="entry name" value="Peptidase_C1"/>
    <property type="match status" value="1"/>
</dbReference>
<dbReference type="PRINTS" id="PR00705">
    <property type="entry name" value="PAPAIN"/>
</dbReference>
<dbReference type="SMART" id="SM00848">
    <property type="entry name" value="Inhibitor_I29"/>
    <property type="match status" value="1"/>
</dbReference>
<dbReference type="SMART" id="SM00645">
    <property type="entry name" value="Pept_C1"/>
    <property type="match status" value="1"/>
</dbReference>
<dbReference type="SUPFAM" id="SSF54001">
    <property type="entry name" value="Cysteine proteinases"/>
    <property type="match status" value="1"/>
</dbReference>
<dbReference type="PROSITE" id="PS00640">
    <property type="entry name" value="THIOL_PROTEASE_ASN"/>
    <property type="match status" value="1"/>
</dbReference>
<dbReference type="PROSITE" id="PS00139">
    <property type="entry name" value="THIOL_PROTEASE_CYS"/>
    <property type="match status" value="1"/>
</dbReference>
<dbReference type="PROSITE" id="PS00639">
    <property type="entry name" value="THIOL_PROTEASE_HIS"/>
    <property type="match status" value="1"/>
</dbReference>
<feature type="signal peptide" evidence="2">
    <location>
        <begin position="1"/>
        <end position="16"/>
    </location>
</feature>
<feature type="propeptide" id="PRO_0000026396" description="Activation peptide">
    <location>
        <begin position="17"/>
        <end position="106"/>
    </location>
</feature>
<feature type="chain" id="PRO_0000026397" description="Digestive cysteine proteinase 3">
    <location>
        <begin position="107"/>
        <end position="321"/>
    </location>
</feature>
<feature type="active site" evidence="1">
    <location>
        <position position="130"/>
    </location>
</feature>
<feature type="active site" evidence="1">
    <location>
        <position position="268"/>
    </location>
</feature>
<feature type="active site" evidence="1">
    <location>
        <position position="288"/>
    </location>
</feature>
<feature type="disulfide bond" evidence="1">
    <location>
        <begin position="127"/>
        <end position="170"/>
    </location>
</feature>
<feature type="disulfide bond" evidence="1">
    <location>
        <begin position="161"/>
        <end position="203"/>
    </location>
</feature>
<feature type="disulfide bond" evidence="1">
    <location>
        <begin position="261"/>
        <end position="310"/>
    </location>
</feature>
<keyword id="KW-1015">Disulfide bond</keyword>
<keyword id="KW-0378">Hydrolase</keyword>
<keyword id="KW-0645">Protease</keyword>
<keyword id="KW-0732">Signal</keyword>
<keyword id="KW-0788">Thiol protease</keyword>
<keyword id="KW-0865">Zymogen</keyword>